<protein>
    <recommendedName>
        <fullName evidence="1">Large ribosomal subunit protein uL10</fullName>
    </recommendedName>
    <alternativeName>
        <fullName evidence="2">50S ribosomal protein L10</fullName>
    </alternativeName>
</protein>
<comment type="function">
    <text evidence="1">Forms part of the ribosomal stalk, playing a central role in the interaction of the ribosome with GTP-bound translation factors.</text>
</comment>
<comment type="subunit">
    <text evidence="1">Part of the ribosomal stalk of the 50S ribosomal subunit. The N-terminus interacts with L11 and the large rRNA to form the base of the stalk. The C-terminus forms an elongated spine to which L12 dimers bind in a sequential fashion forming a multimeric L10(L12)X complex.</text>
</comment>
<comment type="similarity">
    <text evidence="1">Belongs to the universal ribosomal protein uL10 family.</text>
</comment>
<evidence type="ECO:0000255" key="1">
    <source>
        <dbReference type="HAMAP-Rule" id="MF_00362"/>
    </source>
</evidence>
<evidence type="ECO:0000305" key="2"/>
<organism>
    <name type="scientific">Staphylococcus aureus (strain JH1)</name>
    <dbReference type="NCBI Taxonomy" id="359787"/>
    <lineage>
        <taxon>Bacteria</taxon>
        <taxon>Bacillati</taxon>
        <taxon>Bacillota</taxon>
        <taxon>Bacilli</taxon>
        <taxon>Bacillales</taxon>
        <taxon>Staphylococcaceae</taxon>
        <taxon>Staphylococcus</taxon>
    </lineage>
</organism>
<feature type="chain" id="PRO_1000079565" description="Large ribosomal subunit protein uL10">
    <location>
        <begin position="1"/>
        <end position="166"/>
    </location>
</feature>
<reference key="1">
    <citation type="submission" date="2007-06" db="EMBL/GenBank/DDBJ databases">
        <title>Complete sequence of chromosome of Staphylococcus aureus subsp. aureus JH1.</title>
        <authorList>
            <consortium name="US DOE Joint Genome Institute"/>
            <person name="Copeland A."/>
            <person name="Lucas S."/>
            <person name="Lapidus A."/>
            <person name="Barry K."/>
            <person name="Detter J.C."/>
            <person name="Glavina del Rio T."/>
            <person name="Hammon N."/>
            <person name="Israni S."/>
            <person name="Dalin E."/>
            <person name="Tice H."/>
            <person name="Pitluck S."/>
            <person name="Chain P."/>
            <person name="Malfatti S."/>
            <person name="Shin M."/>
            <person name="Vergez L."/>
            <person name="Schmutz J."/>
            <person name="Larimer F."/>
            <person name="Land M."/>
            <person name="Hauser L."/>
            <person name="Kyrpides N."/>
            <person name="Ivanova N."/>
            <person name="Tomasz A."/>
            <person name="Richardson P."/>
        </authorList>
    </citation>
    <scope>NUCLEOTIDE SEQUENCE [LARGE SCALE GENOMIC DNA]</scope>
    <source>
        <strain>JH1</strain>
    </source>
</reference>
<keyword id="KW-0687">Ribonucleoprotein</keyword>
<keyword id="KW-0689">Ribosomal protein</keyword>
<keyword id="KW-0694">RNA-binding</keyword>
<keyword id="KW-0699">rRNA-binding</keyword>
<name>RL10_STAA2</name>
<gene>
    <name evidence="1" type="primary">rplJ</name>
    <name type="ordered locus">SaurJH1_0576</name>
</gene>
<proteinExistence type="inferred from homology"/>
<sequence length="166" mass="17710">MSAIIEAKKQLVDEIAEVLSNSVSTVIVDYRGLTVAEVTDLRSQLREAGVEYKVYKNTMVRRAAEKAGIEGLDEFLTGPTAIATSSEDAVAAAKVISGFAKDHEALEIKSGVMEGNVITAEEVKTVGSLPSHDGLVSMLLSVLQAPVRNFAYAVKAIGEQKEENAE</sequence>
<dbReference type="EMBL" id="CP000736">
    <property type="protein sequence ID" value="ABR51434.1"/>
    <property type="molecule type" value="Genomic_DNA"/>
</dbReference>
<dbReference type="SMR" id="A6TZ16"/>
<dbReference type="KEGG" id="sah:SaurJH1_0576"/>
<dbReference type="HOGENOM" id="CLU_092227_2_0_9"/>
<dbReference type="GO" id="GO:0015934">
    <property type="term" value="C:large ribosomal subunit"/>
    <property type="evidence" value="ECO:0007669"/>
    <property type="project" value="InterPro"/>
</dbReference>
<dbReference type="GO" id="GO:0070180">
    <property type="term" value="F:large ribosomal subunit rRNA binding"/>
    <property type="evidence" value="ECO:0007669"/>
    <property type="project" value="UniProtKB-UniRule"/>
</dbReference>
<dbReference type="GO" id="GO:0003735">
    <property type="term" value="F:structural constituent of ribosome"/>
    <property type="evidence" value="ECO:0007669"/>
    <property type="project" value="InterPro"/>
</dbReference>
<dbReference type="GO" id="GO:0006412">
    <property type="term" value="P:translation"/>
    <property type="evidence" value="ECO:0007669"/>
    <property type="project" value="UniProtKB-UniRule"/>
</dbReference>
<dbReference type="CDD" id="cd05797">
    <property type="entry name" value="Ribosomal_L10"/>
    <property type="match status" value="1"/>
</dbReference>
<dbReference type="FunFam" id="3.30.70.1730:FF:000001">
    <property type="entry name" value="50S ribosomal protein L10"/>
    <property type="match status" value="1"/>
</dbReference>
<dbReference type="Gene3D" id="3.30.70.1730">
    <property type="match status" value="1"/>
</dbReference>
<dbReference type="Gene3D" id="6.10.250.290">
    <property type="match status" value="1"/>
</dbReference>
<dbReference type="HAMAP" id="MF_00362">
    <property type="entry name" value="Ribosomal_uL10"/>
    <property type="match status" value="1"/>
</dbReference>
<dbReference type="InterPro" id="IPR001790">
    <property type="entry name" value="Ribosomal_uL10"/>
</dbReference>
<dbReference type="InterPro" id="IPR043141">
    <property type="entry name" value="Ribosomal_uL10-like_sf"/>
</dbReference>
<dbReference type="InterPro" id="IPR022973">
    <property type="entry name" value="Ribosomal_uL10_bac"/>
</dbReference>
<dbReference type="InterPro" id="IPR047865">
    <property type="entry name" value="Ribosomal_uL10_bac_type"/>
</dbReference>
<dbReference type="InterPro" id="IPR002363">
    <property type="entry name" value="Ribosomal_uL10_CS_bac"/>
</dbReference>
<dbReference type="NCBIfam" id="NF000955">
    <property type="entry name" value="PRK00099.1-1"/>
    <property type="match status" value="1"/>
</dbReference>
<dbReference type="PANTHER" id="PTHR11560">
    <property type="entry name" value="39S RIBOSOMAL PROTEIN L10, MITOCHONDRIAL"/>
    <property type="match status" value="1"/>
</dbReference>
<dbReference type="Pfam" id="PF00466">
    <property type="entry name" value="Ribosomal_L10"/>
    <property type="match status" value="1"/>
</dbReference>
<dbReference type="SUPFAM" id="SSF160369">
    <property type="entry name" value="Ribosomal protein L10-like"/>
    <property type="match status" value="1"/>
</dbReference>
<dbReference type="PROSITE" id="PS01109">
    <property type="entry name" value="RIBOSOMAL_L10"/>
    <property type="match status" value="1"/>
</dbReference>
<accession>A6TZ16</accession>